<evidence type="ECO:0000255" key="1">
    <source>
        <dbReference type="HAMAP-Rule" id="MF_00197"/>
    </source>
</evidence>
<dbReference type="EC" id="5.1.1.7" evidence="1"/>
<dbReference type="EMBL" id="CP000083">
    <property type="protein sequence ID" value="AAZ24959.1"/>
    <property type="molecule type" value="Genomic_DNA"/>
</dbReference>
<dbReference type="RefSeq" id="WP_011040952.1">
    <property type="nucleotide sequence ID" value="NC_003910.7"/>
</dbReference>
<dbReference type="SMR" id="Q48AR8"/>
<dbReference type="STRING" id="167879.CPS_0077"/>
<dbReference type="KEGG" id="cps:CPS_0077"/>
<dbReference type="eggNOG" id="COG0253">
    <property type="taxonomic scope" value="Bacteria"/>
</dbReference>
<dbReference type="HOGENOM" id="CLU_053306_1_1_6"/>
<dbReference type="UniPathway" id="UPA00034">
    <property type="reaction ID" value="UER00025"/>
</dbReference>
<dbReference type="Proteomes" id="UP000000547">
    <property type="component" value="Chromosome"/>
</dbReference>
<dbReference type="GO" id="GO:0005829">
    <property type="term" value="C:cytosol"/>
    <property type="evidence" value="ECO:0007669"/>
    <property type="project" value="TreeGrafter"/>
</dbReference>
<dbReference type="GO" id="GO:0008837">
    <property type="term" value="F:diaminopimelate epimerase activity"/>
    <property type="evidence" value="ECO:0007669"/>
    <property type="project" value="UniProtKB-UniRule"/>
</dbReference>
<dbReference type="GO" id="GO:0009089">
    <property type="term" value="P:lysine biosynthetic process via diaminopimelate"/>
    <property type="evidence" value="ECO:0007669"/>
    <property type="project" value="UniProtKB-UniRule"/>
</dbReference>
<dbReference type="FunFam" id="3.10.310.10:FF:000001">
    <property type="entry name" value="Diaminopimelate epimerase"/>
    <property type="match status" value="1"/>
</dbReference>
<dbReference type="FunFam" id="3.10.310.10:FF:000002">
    <property type="entry name" value="Diaminopimelate epimerase"/>
    <property type="match status" value="1"/>
</dbReference>
<dbReference type="Gene3D" id="3.10.310.10">
    <property type="entry name" value="Diaminopimelate Epimerase, Chain A, domain 1"/>
    <property type="match status" value="2"/>
</dbReference>
<dbReference type="HAMAP" id="MF_00197">
    <property type="entry name" value="DAP_epimerase"/>
    <property type="match status" value="1"/>
</dbReference>
<dbReference type="InterPro" id="IPR018510">
    <property type="entry name" value="DAP_epimerase_AS"/>
</dbReference>
<dbReference type="InterPro" id="IPR001653">
    <property type="entry name" value="DAP_epimerase_DapF"/>
</dbReference>
<dbReference type="NCBIfam" id="TIGR00652">
    <property type="entry name" value="DapF"/>
    <property type="match status" value="1"/>
</dbReference>
<dbReference type="PANTHER" id="PTHR31689:SF0">
    <property type="entry name" value="DIAMINOPIMELATE EPIMERASE"/>
    <property type="match status" value="1"/>
</dbReference>
<dbReference type="PANTHER" id="PTHR31689">
    <property type="entry name" value="DIAMINOPIMELATE EPIMERASE, CHLOROPLASTIC"/>
    <property type="match status" value="1"/>
</dbReference>
<dbReference type="Pfam" id="PF01678">
    <property type="entry name" value="DAP_epimerase"/>
    <property type="match status" value="2"/>
</dbReference>
<dbReference type="SUPFAM" id="SSF54506">
    <property type="entry name" value="Diaminopimelate epimerase-like"/>
    <property type="match status" value="1"/>
</dbReference>
<dbReference type="PROSITE" id="PS01326">
    <property type="entry name" value="DAP_EPIMERASE"/>
    <property type="match status" value="1"/>
</dbReference>
<gene>
    <name evidence="1" type="primary">dapF</name>
    <name type="ordered locus">CPS_0077</name>
</gene>
<proteinExistence type="inferred from homology"/>
<name>DAPF_COLP3</name>
<reference key="1">
    <citation type="journal article" date="2005" name="Proc. Natl. Acad. Sci. U.S.A.">
        <title>The psychrophilic lifestyle as revealed by the genome sequence of Colwellia psychrerythraea 34H through genomic and proteomic analyses.</title>
        <authorList>
            <person name="Methe B.A."/>
            <person name="Nelson K.E."/>
            <person name="Deming J.W."/>
            <person name="Momen B."/>
            <person name="Melamud E."/>
            <person name="Zhang X."/>
            <person name="Moult J."/>
            <person name="Madupu R."/>
            <person name="Nelson W.C."/>
            <person name="Dodson R.J."/>
            <person name="Brinkac L.M."/>
            <person name="Daugherty S.C."/>
            <person name="Durkin A.S."/>
            <person name="DeBoy R.T."/>
            <person name="Kolonay J.F."/>
            <person name="Sullivan S.A."/>
            <person name="Zhou L."/>
            <person name="Davidsen T.M."/>
            <person name="Wu M."/>
            <person name="Huston A.L."/>
            <person name="Lewis M."/>
            <person name="Weaver B."/>
            <person name="Weidman J.F."/>
            <person name="Khouri H."/>
            <person name="Utterback T.R."/>
            <person name="Feldblyum T.V."/>
            <person name="Fraser C.M."/>
        </authorList>
    </citation>
    <scope>NUCLEOTIDE SEQUENCE [LARGE SCALE GENOMIC DNA]</scope>
    <source>
        <strain>34H / ATCC BAA-681</strain>
    </source>
</reference>
<feature type="chain" id="PRO_1000011871" description="Diaminopimelate epimerase">
    <location>
        <begin position="1"/>
        <end position="276"/>
    </location>
</feature>
<feature type="active site" description="Proton donor" evidence="1">
    <location>
        <position position="75"/>
    </location>
</feature>
<feature type="active site" description="Proton acceptor" evidence="1">
    <location>
        <position position="219"/>
    </location>
</feature>
<feature type="binding site" evidence="1">
    <location>
        <position position="13"/>
    </location>
    <ligand>
        <name>substrate</name>
    </ligand>
</feature>
<feature type="binding site" evidence="1">
    <location>
        <position position="46"/>
    </location>
    <ligand>
        <name>substrate</name>
    </ligand>
</feature>
<feature type="binding site" evidence="1">
    <location>
        <position position="66"/>
    </location>
    <ligand>
        <name>substrate</name>
    </ligand>
</feature>
<feature type="binding site" evidence="1">
    <location>
        <begin position="76"/>
        <end position="77"/>
    </location>
    <ligand>
        <name>substrate</name>
    </ligand>
</feature>
<feature type="binding site" evidence="1">
    <location>
        <position position="159"/>
    </location>
    <ligand>
        <name>substrate</name>
    </ligand>
</feature>
<feature type="binding site" evidence="1">
    <location>
        <position position="192"/>
    </location>
    <ligand>
        <name>substrate</name>
    </ligand>
</feature>
<feature type="binding site" evidence="1">
    <location>
        <begin position="210"/>
        <end position="211"/>
    </location>
    <ligand>
        <name>substrate</name>
    </ligand>
</feature>
<feature type="binding site" evidence="1">
    <location>
        <begin position="220"/>
        <end position="221"/>
    </location>
    <ligand>
        <name>substrate</name>
    </ligand>
</feature>
<feature type="site" description="Could be important to modulate the pK values of the two catalytic cysteine residues" evidence="1">
    <location>
        <position position="161"/>
    </location>
</feature>
<feature type="site" description="Could be important to modulate the pK values of the two catalytic cysteine residues" evidence="1">
    <location>
        <position position="210"/>
    </location>
</feature>
<feature type="site" description="Important for dimerization" evidence="1">
    <location>
        <position position="270"/>
    </location>
</feature>
<accession>Q48AR8</accession>
<protein>
    <recommendedName>
        <fullName evidence="1">Diaminopimelate epimerase</fullName>
        <shortName evidence="1">DAP epimerase</shortName>
        <ecNumber evidence="1">5.1.1.7</ecNumber>
    </recommendedName>
    <alternativeName>
        <fullName evidence="1">PLP-independent amino acid racemase</fullName>
    </alternativeName>
</protein>
<keyword id="KW-0028">Amino-acid biosynthesis</keyword>
<keyword id="KW-0963">Cytoplasm</keyword>
<keyword id="KW-0413">Isomerase</keyword>
<keyword id="KW-0457">Lysine biosynthesis</keyword>
<comment type="function">
    <text evidence="1">Catalyzes the stereoinversion of LL-2,6-diaminopimelate (L,L-DAP) to meso-diaminopimelate (meso-DAP), a precursor of L-lysine and an essential component of the bacterial peptidoglycan.</text>
</comment>
<comment type="catalytic activity">
    <reaction evidence="1">
        <text>(2S,6S)-2,6-diaminopimelate = meso-2,6-diaminopimelate</text>
        <dbReference type="Rhea" id="RHEA:15393"/>
        <dbReference type="ChEBI" id="CHEBI:57609"/>
        <dbReference type="ChEBI" id="CHEBI:57791"/>
        <dbReference type="EC" id="5.1.1.7"/>
    </reaction>
</comment>
<comment type="pathway">
    <text evidence="1">Amino-acid biosynthesis; L-lysine biosynthesis via DAP pathway; DL-2,6-diaminopimelate from LL-2,6-diaminopimelate: step 1/1.</text>
</comment>
<comment type="subunit">
    <text evidence="1">Homodimer.</text>
</comment>
<comment type="subcellular location">
    <subcellularLocation>
        <location evidence="1">Cytoplasm</location>
    </subcellularLocation>
</comment>
<comment type="similarity">
    <text evidence="1">Belongs to the diaminopimelate epimerase family.</text>
</comment>
<organism>
    <name type="scientific">Colwellia psychrerythraea (strain 34H / ATCC BAA-681)</name>
    <name type="common">Vibrio psychroerythus</name>
    <dbReference type="NCBI Taxonomy" id="167879"/>
    <lineage>
        <taxon>Bacteria</taxon>
        <taxon>Pseudomonadati</taxon>
        <taxon>Pseudomonadota</taxon>
        <taxon>Gammaproteobacteria</taxon>
        <taxon>Alteromonadales</taxon>
        <taxon>Colwelliaceae</taxon>
        <taxon>Colwellia</taxon>
    </lineage>
</organism>
<sequence>MLVNFSKMHGLGNDFLVLDNVTQNVFLSPEQITKFANRNFGVGFDQLLVVEPPYDPDLDFHYRIYNADGSEVGQCGNGARCFAKFVRMKGLCNKHKIKVSTSTGKMNLHIERDGNISVTMPVPQFEPKKIPFTAQKTEGTYILRSESETVLCGAVSMGNPHCVVTVDSVAEADVESLGKELSVHERFPEDANVGFMEIVSPNYIKLRVYERGAAETLACGSGACAAVVIGYMQKKLAKQVTVELPGGKLRIFWQGPGHPVKMSGPATHVFDGQISI</sequence>